<keyword id="KW-0002">3D-structure</keyword>
<keyword id="KW-0134">Cell wall</keyword>
<keyword id="KW-0903">Direct protein sequencing</keyword>
<keyword id="KW-1015">Disulfide bond</keyword>
<keyword id="KW-1185">Reference proteome</keyword>
<keyword id="KW-0964">Secreted</keyword>
<keyword id="KW-0732">Signal</keyword>
<keyword id="KW-0800">Toxin</keyword>
<accession>P81702</accession>
<accession>Q8NJ53</accession>
<protein>
    <recommendedName>
        <fullName evidence="10 11 15 21">Cerato-platanin</fullName>
    </recommendedName>
</protein>
<organism>
    <name type="scientific">Ceratocystis fimbriata f. sp. platani</name>
    <dbReference type="NCBI Taxonomy" id="88771"/>
    <lineage>
        <taxon>Eukaryota</taxon>
        <taxon>Fungi</taxon>
        <taxon>Dikarya</taxon>
        <taxon>Ascomycota</taxon>
        <taxon>Pezizomycotina</taxon>
        <taxon>Sordariomycetes</taxon>
        <taxon>Hypocreomycetidae</taxon>
        <taxon>Microascales</taxon>
        <taxon>Ceratocystidaceae</taxon>
        <taxon>Ceratocystis</taxon>
    </lineage>
</organism>
<comment type="function">
    <text evidence="2 4 6 7 8 9">Phytotoxin which causes production of phytoalexin in platanus acerifolia, platanus occidentalis and platanus orientalis (PubMed:10455173, PubMed:16679539, PubMed:21454637, PubMed:24968226, PubMed:33736287). Induces cell necrosis in tobacco leaves, and in callus cells and leaves of P.acerifolia (PubMed:10455173). Induces reactive oxygen species (ROS) synthesis, nitric oxide (NO) production and mitogen-activated protein kinases (MAPKs) phosphorylation in the leaves of A.thaliana and P.acerifolia (PubMed:33736287). Results in H(2)O(2) production on the epidermis around the stomata, rapid closure of the stomata, reduced photosynthetic and CO(2) assimilation rate, and an increase in a number of volatile organic compound (VOC) emission in A.thaliana leaves (PubMed:24968226). Induces overexpression of genes related to salicylic acid- and ethylene-signaling, camalexin synthesis, ROS production and oxidative stress, and genes of various receptor kinases, and down-regulation of a number of jasmonic acid (JA)-signaling genes in A.thaliana leaves (PubMed:24968226). Renders resistance against C.platani in A.thaliana and P.acerifolia (PubMed:24968226). Renders localised resistance of A.thaliana against infection by virulent foliar pathogens B.cinerea and P.syringae pv. tomato (PubMed:24968226). Binds cellulose analog carboxymethyl cellulose (CMC) (PubMed:33736287). Expansin-like protein with probable fungal and plant cell wall loosening activity based on its non-enzymatic cellulose weakening activity in vitro (PubMed:23512479, PubMed:33736287). Increases glucose production by cellulase after pre-incubation of cellulose with this protein (PubMed:33736287). In contrast, according to PubMed:23512479, no synergistic effect with cellulases (PubMed:23512479). May have a structural role in the fungal cell wall based on its ability to bind chitin, but does not bind beta-1,3-glucan (PubMed:23512479).</text>
</comment>
<comment type="biophysicochemical properties">
    <phDependence>
        <text evidence="7">Optimum pH is 5.0 for the non-enzymatic cellulose weakening activity.</text>
    </phDependence>
    <temperatureDependence>
        <text evidence="7">Optimum temperature is 38 degrees Celsius for the non-enzymatic cellulose weakening activity.</text>
    </temperatureDependence>
</comment>
<comment type="subunit">
    <text evidence="4 6 9">Monomer.</text>
</comment>
<comment type="subcellular location">
    <subcellularLocation>
        <location evidence="2 3 4 5">Secreted</location>
    </subcellularLocation>
    <subcellularLocation>
        <location evidence="3 5">Secreted</location>
        <location evidence="3 5">Cell wall</location>
    </subcellularLocation>
    <text evidence="3 5">Localizes on the cell walls of hyphae and conidia (PubMed:15063505, PubMed:19387635). Localizes on the cell walls of ascospores (PubMed:15063505). More abundant on the conidial and ascospore walls than on the hyphal wall (PubMed:15063505). Distributes across the entire thickness of the conidial wall (PubMed:15063505). More densely localized on the layer near the plasma membrane than on the more outward layer of the ascospore wall (PubMed:15063505). Also localizes on the fibrillar material at the surface of ascospores (PubMed:15063505).</text>
</comment>
<comment type="mass spectrometry" mass="12383.6" method="MALDI" evidence="2">
    <text>The measured mass is that of the mature protein.</text>
</comment>
<comment type="mass spectrometry" mass="12395.0" method="MALDI" evidence="4">
    <text>The measured mass is that of the mature protein.</text>
</comment>
<comment type="biotechnology">
    <text evidence="17">Generated Asn-98 mutant protein displays improved cellulose weakening activity, thus making it a potential candidate in the production of biofuel as an enhancer of enzymatic hydrolysis of cellulosic materials.</text>
</comment>
<comment type="similarity">
    <text evidence="16">Belongs to the cerato-platanin family.</text>
</comment>
<evidence type="ECO:0000255" key="1"/>
<evidence type="ECO:0000269" key="2">
    <source>
    </source>
</evidence>
<evidence type="ECO:0000269" key="3">
    <source>
    </source>
</evidence>
<evidence type="ECO:0000269" key="4">
    <source>
    </source>
</evidence>
<evidence type="ECO:0000269" key="5">
    <source>
    </source>
</evidence>
<evidence type="ECO:0000269" key="6">
    <source>
    </source>
</evidence>
<evidence type="ECO:0000269" key="7">
    <source>
    </source>
</evidence>
<evidence type="ECO:0000269" key="8">
    <source>
    </source>
</evidence>
<evidence type="ECO:0000269" key="9">
    <source>
    </source>
</evidence>
<evidence type="ECO:0000303" key="10">
    <source>
    </source>
</evidence>
<evidence type="ECO:0000303" key="11">
    <source>
    </source>
</evidence>
<evidence type="ECO:0000303" key="12">
    <source>
    </source>
</evidence>
<evidence type="ECO:0000303" key="13">
    <source>
    </source>
</evidence>
<evidence type="ECO:0000303" key="14">
    <source>
    </source>
</evidence>
<evidence type="ECO:0000303" key="15">
    <source>
    </source>
</evidence>
<evidence type="ECO:0000305" key="16"/>
<evidence type="ECO:0000305" key="17">
    <source>
    </source>
</evidence>
<evidence type="ECO:0000312" key="18">
    <source>
        <dbReference type="EMBL" id="ABM63505.1"/>
    </source>
</evidence>
<evidence type="ECO:0000312" key="19">
    <source>
        <dbReference type="EMBL" id="ABM63513.1"/>
    </source>
</evidence>
<evidence type="ECO:0000312" key="20">
    <source>
        <dbReference type="EMBL" id="AGQ22226.1"/>
    </source>
</evidence>
<evidence type="ECO:0000312" key="21">
    <source>
        <dbReference type="EMBL" id="CAC84090.2"/>
    </source>
</evidence>
<evidence type="ECO:0000312" key="22">
    <source>
        <dbReference type="EMBL" id="KKF93197.1"/>
    </source>
</evidence>
<evidence type="ECO:0000312" key="23">
    <source>
        <dbReference type="Proteomes" id="UP000034841"/>
    </source>
</evidence>
<evidence type="ECO:0007744" key="24">
    <source>
        <dbReference type="PDB" id="2KQA"/>
    </source>
</evidence>
<evidence type="ECO:0007829" key="25">
    <source>
        <dbReference type="PDB" id="2KQA"/>
    </source>
</evidence>
<name>CEPL_CERFI</name>
<dbReference type="EMBL" id="AJ311644">
    <property type="protein sequence ID" value="CAC84090.2"/>
    <property type="molecule type" value="Genomic_DNA"/>
</dbReference>
<dbReference type="EMBL" id="EF017218">
    <property type="protein sequence ID" value="ABM63505.1"/>
    <property type="molecule type" value="Genomic_DNA"/>
</dbReference>
<dbReference type="EMBL" id="EF017226">
    <property type="protein sequence ID" value="ABM63513.1"/>
    <property type="molecule type" value="Genomic_DNA"/>
</dbReference>
<dbReference type="EMBL" id="KF302680">
    <property type="protein sequence ID" value="AGQ22226.1"/>
    <property type="molecule type" value="Genomic_DNA"/>
</dbReference>
<dbReference type="EMBL" id="LBBL01000268">
    <property type="protein sequence ID" value="KKF93197.1"/>
    <property type="molecule type" value="Genomic_DNA"/>
</dbReference>
<dbReference type="PDB" id="2KQA">
    <property type="method" value="NMR"/>
    <property type="chains" value="A=15-134"/>
</dbReference>
<dbReference type="PDBsum" id="2KQA"/>
<dbReference type="SMR" id="P81702"/>
<dbReference type="OrthoDB" id="99680at147550"/>
<dbReference type="EvolutionaryTrace" id="P81702"/>
<dbReference type="PHI-base" id="PHI:3167"/>
<dbReference type="Proteomes" id="UP000034841">
    <property type="component" value="Unassembled WGS sequence"/>
</dbReference>
<dbReference type="GO" id="GO:0005619">
    <property type="term" value="C:ascospore wall"/>
    <property type="evidence" value="ECO:0000314"/>
    <property type="project" value="UniProtKB"/>
</dbReference>
<dbReference type="GO" id="GO:0043245">
    <property type="term" value="C:extraorganismal space"/>
    <property type="evidence" value="ECO:0000314"/>
    <property type="project" value="UniProtKB"/>
</dbReference>
<dbReference type="GO" id="GO:0009277">
    <property type="term" value="C:fungal-type cell wall"/>
    <property type="evidence" value="ECO:0000314"/>
    <property type="project" value="UniProtKB"/>
</dbReference>
<dbReference type="GO" id="GO:0030446">
    <property type="term" value="C:hyphal cell wall"/>
    <property type="evidence" value="ECO:0000314"/>
    <property type="project" value="UniProtKB"/>
</dbReference>
<dbReference type="GO" id="GO:0008061">
    <property type="term" value="F:chitin binding"/>
    <property type="evidence" value="ECO:0000314"/>
    <property type="project" value="UniProtKB"/>
</dbReference>
<dbReference type="GO" id="GO:0090729">
    <property type="term" value="F:toxin activity"/>
    <property type="evidence" value="ECO:0000314"/>
    <property type="project" value="UniProtKB"/>
</dbReference>
<dbReference type="GO" id="GO:0035821">
    <property type="term" value="P:modulation of process of another organism"/>
    <property type="evidence" value="ECO:0000314"/>
    <property type="project" value="UniProtKB"/>
</dbReference>
<dbReference type="CDD" id="cd22778">
    <property type="entry name" value="DPBB_CEPL-like"/>
    <property type="match status" value="1"/>
</dbReference>
<dbReference type="Gene3D" id="2.40.40.10">
    <property type="entry name" value="RlpA-like domain"/>
    <property type="match status" value="1"/>
</dbReference>
<dbReference type="InterPro" id="IPR010829">
    <property type="entry name" value="Cerato-platanin"/>
</dbReference>
<dbReference type="InterPro" id="IPR036908">
    <property type="entry name" value="RlpA-like_sf"/>
</dbReference>
<dbReference type="Pfam" id="PF07249">
    <property type="entry name" value="Cerato-platanin"/>
    <property type="match status" value="1"/>
</dbReference>
<dbReference type="SUPFAM" id="SSF50685">
    <property type="entry name" value="Barwin-like endoglucanases"/>
    <property type="match status" value="1"/>
</dbReference>
<sequence length="134" mass="13893">MKFSILPMIASAMAVSISYDPIYAADLSMGSVACSNGDHGLMAQYPTLGEVPGFPNVGGIPDIAGWDSPSCGTCWKVTIPNGNSIFIRGVDSGRGGFNVNPTAFTKLVGSTEAGRVDNVNYVQVDLSNCINGAN</sequence>
<proteinExistence type="evidence at protein level"/>
<reference key="1">
    <citation type="journal article" date="2004" name="FEMS Microbiol. Lett.">
        <title>Cerato-platanin protein is located in the cell walls of ascospores, conidia and hyphae of Ceratocystis fimbriata f. sp. platani.</title>
        <authorList>
            <person name="Boddi S."/>
            <person name="Comparini C."/>
            <person name="Calamassi R."/>
            <person name="Pazzagli L."/>
            <person name="Cappugi G."/>
            <person name="Scala A."/>
        </authorList>
    </citation>
    <scope>NUCLEOTIDE SEQUENCE [GENOMIC DNA]</scope>
    <scope>SUBCELLULAR LOCATION</scope>
    <source>
        <strain evidence="11">Cf AF 100</strain>
    </source>
</reference>
<reference evidence="21" key="2">
    <citation type="journal article" date="2006" name="Cell Biochem. Biophys.">
        <title>Cerato-platanin, the first member of a new fungal protein family: cloning, expression, and characterization.</title>
        <authorList>
            <person name="Pazzagli L."/>
            <person name="Pantera B."/>
            <person name="Carresi L."/>
            <person name="Zoppi C."/>
            <person name="Pertinhez T.A."/>
            <person name="Spisni A."/>
            <person name="Tegli S."/>
            <person name="Scala A."/>
            <person name="Cappugi G."/>
        </authorList>
    </citation>
    <scope>NUCLEOTIDE SEQUENCE [GENOMIC DNA]</scope>
    <scope>FUNCTION</scope>
    <scope>SUBUNIT</scope>
    <scope>SUBCELLULAR LOCATION</scope>
    <scope>MASS SPECTROMETRY</scope>
    <scope>DISULFIDE BONDS</scope>
    <scope>CIRCULAR DICHROISM ANALYSIS</scope>
    <source>
        <strain evidence="12 21">Cf AF 100</strain>
        <tissue evidence="12">Mycelium</tissue>
    </source>
</reference>
<reference evidence="18" key="3">
    <citation type="journal article" date="2009" name="Appl. Microbiol. Biotechnol.">
        <title>New proteins orthologous to cerato-platanin in various Ceratocystis species and the purification and characterization of cerato-populin from Ceratocystis populicola.</title>
        <authorList>
            <person name="Comparini C."/>
            <person name="Carresi L."/>
            <person name="Pagni E."/>
            <person name="Sbrana F."/>
            <person name="Sebastiani F."/>
            <person name="Luchi N."/>
            <person name="Santini A."/>
            <person name="Capretti P."/>
            <person name="Tiribilli B."/>
            <person name="Pazzagli L."/>
            <person name="Cappugi G."/>
            <person name="Scala A."/>
        </authorList>
    </citation>
    <scope>NUCLEOTIDE SEQUENCE [GENOMIC DNA]</scope>
    <scope>SUBCELLULAR LOCATION</scope>
    <source>
        <strain evidence="13 18">Cf AF 100</strain>
        <strain evidence="13 19">Cf15</strain>
        <tissue evidence="13">Mycelium</tissue>
    </source>
</reference>
<reference evidence="20" key="4">
    <citation type="journal article" date="2013" name="Appl. Environ. Microbiol.">
        <title>Rapid Detection of Ceratocystis platani Inoculum by Quantitative Real-Time PCR Assay.</title>
        <authorList>
            <person name="Luchi N."/>
            <person name="Ghelardini L."/>
            <person name="Belbahri L."/>
            <person name="Quartier M."/>
            <person name="Santini A."/>
        </authorList>
    </citation>
    <scope>NUCLEOTIDE SEQUENCE [GENOMIC DNA]</scope>
    <source>
        <tissue evidence="14">Mycelium</tissue>
    </source>
</reference>
<reference evidence="22 23" key="5">
    <citation type="submission" date="2015-04" db="EMBL/GenBank/DDBJ databases">
        <title>Genome sequence of Ceratocystis platani, a major pathogen of plane trees.</title>
        <authorList>
            <person name="Belbahri L."/>
        </authorList>
    </citation>
    <scope>NUCLEOTIDE SEQUENCE [LARGE SCALE GENOMIC DNA]</scope>
    <source>
        <strain evidence="22 23">CFO</strain>
    </source>
</reference>
<reference key="6">
    <citation type="journal article" date="1999" name="J. Biol. Chem.">
        <title>Purification, characterization, and amino acid sequence of cerato-platanin, a new phytotoxic protein from Ceratocystis fimbriata f.sp. platani.</title>
        <authorList>
            <person name="Pazzagli L."/>
            <person name="Cappugi G."/>
            <person name="Manao G."/>
            <person name="Camici G."/>
            <person name="Santini A."/>
            <person name="Scala A."/>
        </authorList>
    </citation>
    <scope>PROTEIN SEQUENCE OF 15-134</scope>
    <scope>FUNCTION</scope>
    <scope>SUBCELLULAR LOCATION</scope>
    <scope>MASS SPECTROMETRY</scope>
    <scope>DISULFIDE BONDS</scope>
    <source>
        <strain evidence="10">Cf AF 100</strain>
    </source>
</reference>
<reference key="7">
    <citation type="journal article" date="2014" name="Appl. Microbiol. Biotechnol.">
        <title>Cerato-platanin shows expansin-like activity on cellulosic materials.</title>
        <authorList>
            <person name="Baccelli I."/>
            <person name="Luti S."/>
            <person name="Bernardi R."/>
            <person name="Scala A."/>
            <person name="Pazzagli L."/>
        </authorList>
    </citation>
    <scope>FUNCTION</scope>
    <scope>BIOPHYSICOCHEMICAL PROPERTIES</scope>
</reference>
<reference key="8">
    <citation type="journal article" date="2014" name="PLoS ONE">
        <title>Cerato-platanin induces resistance in Arabidopsis leaves through stomatal perception, overexpression of salicylic acid- and ethylene-signaling genes and camalexin biosynthesis.</title>
        <authorList>
            <person name="Baccelli I."/>
            <person name="Lombardi L."/>
            <person name="Luti S."/>
            <person name="Bernardi R."/>
            <person name="Picciarelli P."/>
            <person name="Scala A."/>
            <person name="Pazzagli L."/>
        </authorList>
    </citation>
    <scope>FUNCTION</scope>
</reference>
<reference key="9">
    <citation type="journal article" date="2020" name="Int. J. Biol. Macromol.">
        <title>Partitioning the structural features that underlie expansin-like and elicitor activities of cerato-platanin.</title>
        <authorList>
            <person name="Luti S."/>
            <person name="Bemporad F."/>
            <person name="Vivoli Vega M."/>
            <person name="Leri M."/>
            <person name="Musiani F."/>
            <person name="Baccelli I."/>
            <person name="Pazzagli L."/>
        </authorList>
    </citation>
    <scope>FUNCTION</scope>
    <scope>SUBUNIT</scope>
    <scope>BIOTECHNOLOGY</scope>
    <scope>MUTAGENESIS OF VAL-77; ASP-91 AND ASN-98</scope>
    <scope>IN SILICO MOLECULAR DOCKING OF CELLOHEXOSE</scope>
</reference>
<reference key="10">
    <citation type="journal article" date="2011" name="J. Biol. Chem.">
        <title>The structure of the elicitor Cerato-platanin (CP), the first member of the CP fungal protein family, reveals a double psibeta-barrel fold and carbohydrate binding.</title>
        <authorList>
            <person name="de Oliveira A.L."/>
            <person name="Gallo M."/>
            <person name="Pazzagli L."/>
            <person name="Benedetti C.E."/>
            <person name="Cappugi G."/>
            <person name="Scala A."/>
            <person name="Pantera B."/>
            <person name="Spisni A."/>
            <person name="Pertinhez T.A."/>
            <person name="Cicero D.O."/>
        </authorList>
    </citation>
    <scope>STRUCTURE BY NMR</scope>
    <scope>FUNCTION</scope>
    <scope>SUBUNIT</scope>
    <scope>REGIONS</scope>
    <scope>DISULFIDE BONDS</scope>
</reference>
<feature type="signal peptide" evidence="1 2">
    <location>
        <begin position="1"/>
        <end position="14"/>
    </location>
</feature>
<feature type="chain" id="PRO_0000156113" description="Cerato-platanin" evidence="1 2">
    <location>
        <begin position="15"/>
        <end position="134"/>
    </location>
</feature>
<feature type="region of interest" description="Binding of oligomers of N-acetylglucosamine (GlcNAc)" evidence="6">
    <location>
        <begin position="18"/>
        <end position="20"/>
    </location>
</feature>
<feature type="region of interest" description="Binding of N-acetylglucosamine tetramer (GlcNAc-4)" evidence="6">
    <location>
        <begin position="31"/>
        <end position="43"/>
    </location>
</feature>
<feature type="region of interest" description="Binding of N-acetylglucosamine tetramer (GlcNAc-4)" evidence="6">
    <location>
        <begin position="65"/>
        <end position="68"/>
    </location>
</feature>
<feature type="region of interest" description="Binding of N-acetylglucosamine tetramer (GlcNAc-4)" evidence="6">
    <location>
        <begin position="91"/>
        <end position="95"/>
    </location>
</feature>
<feature type="region of interest" description="Binding of oligomers of N-acetylglucosamine (GlcNAc)" evidence="6">
    <location>
        <begin position="113"/>
        <end position="116"/>
    </location>
</feature>
<feature type="disulfide bond" evidence="2 4 6 24">
    <location>
        <begin position="34"/>
        <end position="71"/>
    </location>
</feature>
<feature type="disulfide bond" evidence="2 4 6 24">
    <location>
        <begin position="74"/>
        <end position="129"/>
    </location>
</feature>
<feature type="mutagenesis site" description="Altered protein stability due to dramatic change in structure without altering the net charge of the protein. Dramatically altered thermal resistance and thermodynamic stability. No change in cellulose weakening activity in vitro. Pre-incubation of cellulose with the mutant increases glucose production by cellulase. Weak induction of phytoalexins production and reactive oxygen species (ROS) synthesis in the leaves of the non-host plant A.thaliana. No change in binding affinity to cellulose analog carboxymethyl cellulose (CMC)." evidence="9">
    <original>V</original>
    <variation>A</variation>
    <location>
        <position position="77"/>
    </location>
</feature>
<feature type="mutagenesis site" description="No change in structure, but a dramatic change in thermal resistance and thermodynamic stability likely due to loss of a negative charge. Weak induction of phytoalexins production, but loss of induction of reactive oxygen species (ROS) synthesis in the leaves of the non-host plant A.thaliana. Lower binding affinity to cellulose analog carboxymethyl cellulose (CMC)." evidence="9">
    <original>D</original>
    <variation>A</variation>
    <location>
        <position position="91"/>
    </location>
</feature>
<feature type="mutagenesis site" description="No change in structure, thermal resistance nor thermodynamic stability. Increased negative net charge in the region involved in carbohydrate interaction. Slightly increased cellulose weakening activity in vitro. Pre-incubation of cellulose with the mutant increases glucose production by cellulase. Weak induction of phytoalexins production, but loss of induction of reactive oxygen species (ROS) synthesis in the leaves of the non-host plant A.thaliana. Higher binding affinity to cellulose analog carboxymethyl cellulose (CMC)." evidence="9">
    <original>N</original>
    <variation>D</variation>
    <location>
        <position position="98"/>
    </location>
</feature>
<feature type="strand" evidence="25">
    <location>
        <begin position="17"/>
        <end position="19"/>
    </location>
</feature>
<feature type="helix" evidence="25">
    <location>
        <begin position="29"/>
        <end position="31"/>
    </location>
</feature>
<feature type="turn" evidence="25">
    <location>
        <begin position="37"/>
        <end position="39"/>
    </location>
</feature>
<feature type="turn" evidence="25">
    <location>
        <begin position="42"/>
        <end position="44"/>
    </location>
</feature>
<feature type="strand" evidence="25">
    <location>
        <begin position="46"/>
        <end position="52"/>
    </location>
</feature>
<feature type="strand" evidence="25">
    <location>
        <begin position="54"/>
        <end position="60"/>
    </location>
</feature>
<feature type="strand" evidence="25">
    <location>
        <begin position="74"/>
        <end position="79"/>
    </location>
</feature>
<feature type="turn" evidence="25">
    <location>
        <begin position="80"/>
        <end position="82"/>
    </location>
</feature>
<feature type="strand" evidence="25">
    <location>
        <begin position="83"/>
        <end position="92"/>
    </location>
</feature>
<feature type="strand" evidence="25">
    <location>
        <begin position="94"/>
        <end position="99"/>
    </location>
</feature>
<feature type="helix" evidence="25">
    <location>
        <begin position="101"/>
        <end position="108"/>
    </location>
</feature>
<feature type="strand" evidence="25">
    <location>
        <begin position="109"/>
        <end position="113"/>
    </location>
</feature>
<feature type="strand" evidence="25">
    <location>
        <begin position="120"/>
        <end position="123"/>
    </location>
</feature>
<feature type="helix" evidence="25">
    <location>
        <begin position="126"/>
        <end position="133"/>
    </location>
</feature>
<gene>
    <name evidence="11 12 20" type="primary">cp</name>
    <name evidence="22" type="ORF">CFO_g4460</name>
</gene>